<comment type="function">
    <text evidence="1">Catalyzes the methyl esterification of L-isoaspartyl residues in peptides and proteins that result from spontaneous decomposition of normal L-aspartyl and L-asparaginyl residues. It plays a role in the repair and/or degradation of damaged proteins.</text>
</comment>
<comment type="catalytic activity">
    <reaction evidence="1">
        <text>[protein]-L-isoaspartate + S-adenosyl-L-methionine = [protein]-L-isoaspartate alpha-methyl ester + S-adenosyl-L-homocysteine</text>
        <dbReference type="Rhea" id="RHEA:12705"/>
        <dbReference type="Rhea" id="RHEA-COMP:12143"/>
        <dbReference type="Rhea" id="RHEA-COMP:12144"/>
        <dbReference type="ChEBI" id="CHEBI:57856"/>
        <dbReference type="ChEBI" id="CHEBI:59789"/>
        <dbReference type="ChEBI" id="CHEBI:90596"/>
        <dbReference type="ChEBI" id="CHEBI:90598"/>
        <dbReference type="EC" id="2.1.1.77"/>
    </reaction>
</comment>
<comment type="subcellular location">
    <subcellularLocation>
        <location evidence="1">Cytoplasm</location>
    </subcellularLocation>
</comment>
<comment type="similarity">
    <text evidence="1">Belongs to the methyltransferase superfamily. L-isoaspartyl/D-aspartyl protein methyltransferase family.</text>
</comment>
<gene>
    <name evidence="1" type="primary">pcm</name>
    <name type="ordered locus">RPC_2521</name>
</gene>
<protein>
    <recommendedName>
        <fullName evidence="1">Protein-L-isoaspartate O-methyltransferase</fullName>
        <ecNumber evidence="1">2.1.1.77</ecNumber>
    </recommendedName>
    <alternativeName>
        <fullName evidence="1">L-isoaspartyl protein carboxyl methyltransferase</fullName>
    </alternativeName>
    <alternativeName>
        <fullName evidence="1">Protein L-isoaspartyl methyltransferase</fullName>
    </alternativeName>
    <alternativeName>
        <fullName evidence="1">Protein-beta-aspartate methyltransferase</fullName>
        <shortName evidence="1">PIMT</shortName>
    </alternativeName>
</protein>
<evidence type="ECO:0000255" key="1">
    <source>
        <dbReference type="HAMAP-Rule" id="MF_00090"/>
    </source>
</evidence>
<proteinExistence type="inferred from homology"/>
<name>PIMT_RHOPB</name>
<sequence length="216" mass="23667">MPIGPPPPEKMMFQLSLRRRGISDQAVLRAMDEVPRDAFVEPGQRAEAWLDTALPIACGQTISQPFVVAYMTEQMQLRPEHRVLEIGTGSGYQAAILSRLSRAVLTLERFKTLADQARARLAALHCDNVEVRIGDGFAVPADAGLFDRIIVTAAMEEVPASLLDRLDLDGVLIAPVGPHNATQTLLRIRKSKSGIERKELVAVRFVPALPGLAREL</sequence>
<organism>
    <name type="scientific">Rhodopseudomonas palustris (strain BisB18)</name>
    <dbReference type="NCBI Taxonomy" id="316056"/>
    <lineage>
        <taxon>Bacteria</taxon>
        <taxon>Pseudomonadati</taxon>
        <taxon>Pseudomonadota</taxon>
        <taxon>Alphaproteobacteria</taxon>
        <taxon>Hyphomicrobiales</taxon>
        <taxon>Nitrobacteraceae</taxon>
        <taxon>Rhodopseudomonas</taxon>
    </lineage>
</organism>
<feature type="chain" id="PRO_0000351924" description="Protein-L-isoaspartate O-methyltransferase">
    <location>
        <begin position="1"/>
        <end position="216"/>
    </location>
</feature>
<feature type="active site" evidence="1">
    <location>
        <position position="63"/>
    </location>
</feature>
<keyword id="KW-0963">Cytoplasm</keyword>
<keyword id="KW-0489">Methyltransferase</keyword>
<keyword id="KW-0949">S-adenosyl-L-methionine</keyword>
<keyword id="KW-0808">Transferase</keyword>
<dbReference type="EC" id="2.1.1.77" evidence="1"/>
<dbReference type="EMBL" id="CP000301">
    <property type="protein sequence ID" value="ABD88072.1"/>
    <property type="molecule type" value="Genomic_DNA"/>
</dbReference>
<dbReference type="SMR" id="Q214W4"/>
<dbReference type="STRING" id="316056.RPC_2521"/>
<dbReference type="KEGG" id="rpc:RPC_2521"/>
<dbReference type="eggNOG" id="COG2518">
    <property type="taxonomic scope" value="Bacteria"/>
</dbReference>
<dbReference type="HOGENOM" id="CLU_055432_2_0_5"/>
<dbReference type="OrthoDB" id="9810066at2"/>
<dbReference type="GO" id="GO:0005737">
    <property type="term" value="C:cytoplasm"/>
    <property type="evidence" value="ECO:0007669"/>
    <property type="project" value="UniProtKB-SubCell"/>
</dbReference>
<dbReference type="GO" id="GO:0004719">
    <property type="term" value="F:protein-L-isoaspartate (D-aspartate) O-methyltransferase activity"/>
    <property type="evidence" value="ECO:0007669"/>
    <property type="project" value="UniProtKB-UniRule"/>
</dbReference>
<dbReference type="GO" id="GO:0032259">
    <property type="term" value="P:methylation"/>
    <property type="evidence" value="ECO:0007669"/>
    <property type="project" value="UniProtKB-KW"/>
</dbReference>
<dbReference type="GO" id="GO:0036211">
    <property type="term" value="P:protein modification process"/>
    <property type="evidence" value="ECO:0007669"/>
    <property type="project" value="UniProtKB-UniRule"/>
</dbReference>
<dbReference type="GO" id="GO:0030091">
    <property type="term" value="P:protein repair"/>
    <property type="evidence" value="ECO:0007669"/>
    <property type="project" value="UniProtKB-UniRule"/>
</dbReference>
<dbReference type="CDD" id="cd02440">
    <property type="entry name" value="AdoMet_MTases"/>
    <property type="match status" value="1"/>
</dbReference>
<dbReference type="FunFam" id="3.40.50.150:FF:000010">
    <property type="entry name" value="Protein-L-isoaspartate O-methyltransferase"/>
    <property type="match status" value="1"/>
</dbReference>
<dbReference type="Gene3D" id="3.40.50.150">
    <property type="entry name" value="Vaccinia Virus protein VP39"/>
    <property type="match status" value="1"/>
</dbReference>
<dbReference type="HAMAP" id="MF_00090">
    <property type="entry name" value="PIMT"/>
    <property type="match status" value="1"/>
</dbReference>
<dbReference type="InterPro" id="IPR000682">
    <property type="entry name" value="PCMT"/>
</dbReference>
<dbReference type="InterPro" id="IPR029063">
    <property type="entry name" value="SAM-dependent_MTases_sf"/>
</dbReference>
<dbReference type="NCBIfam" id="TIGR00080">
    <property type="entry name" value="pimt"/>
    <property type="match status" value="1"/>
</dbReference>
<dbReference type="NCBIfam" id="NF001453">
    <property type="entry name" value="PRK00312.1"/>
    <property type="match status" value="1"/>
</dbReference>
<dbReference type="PANTHER" id="PTHR11579">
    <property type="entry name" value="PROTEIN-L-ISOASPARTATE O-METHYLTRANSFERASE"/>
    <property type="match status" value="1"/>
</dbReference>
<dbReference type="PANTHER" id="PTHR11579:SF0">
    <property type="entry name" value="PROTEIN-L-ISOASPARTATE(D-ASPARTATE) O-METHYLTRANSFERASE"/>
    <property type="match status" value="1"/>
</dbReference>
<dbReference type="Pfam" id="PF01135">
    <property type="entry name" value="PCMT"/>
    <property type="match status" value="1"/>
</dbReference>
<dbReference type="SUPFAM" id="SSF53335">
    <property type="entry name" value="S-adenosyl-L-methionine-dependent methyltransferases"/>
    <property type="match status" value="1"/>
</dbReference>
<accession>Q214W4</accession>
<reference key="1">
    <citation type="submission" date="2006-03" db="EMBL/GenBank/DDBJ databases">
        <title>Complete sequence of Rhodopseudomonas palustris BisB18.</title>
        <authorList>
            <consortium name="US DOE Joint Genome Institute"/>
            <person name="Copeland A."/>
            <person name="Lucas S."/>
            <person name="Lapidus A."/>
            <person name="Barry K."/>
            <person name="Detter J.C."/>
            <person name="Glavina del Rio T."/>
            <person name="Hammon N."/>
            <person name="Israni S."/>
            <person name="Dalin E."/>
            <person name="Tice H."/>
            <person name="Pitluck S."/>
            <person name="Chain P."/>
            <person name="Malfatti S."/>
            <person name="Shin M."/>
            <person name="Vergez L."/>
            <person name="Schmutz J."/>
            <person name="Larimer F."/>
            <person name="Land M."/>
            <person name="Hauser L."/>
            <person name="Pelletier D.A."/>
            <person name="Kyrpides N."/>
            <person name="Anderson I."/>
            <person name="Oda Y."/>
            <person name="Harwood C.S."/>
            <person name="Richardson P."/>
        </authorList>
    </citation>
    <scope>NUCLEOTIDE SEQUENCE [LARGE SCALE GENOMIC DNA]</scope>
    <source>
        <strain>BisB18</strain>
    </source>
</reference>